<evidence type="ECO:0000255" key="1">
    <source>
        <dbReference type="HAMAP-Rule" id="MF_00195"/>
    </source>
</evidence>
<evidence type="ECO:0000256" key="2">
    <source>
        <dbReference type="SAM" id="MobiDB-lite"/>
    </source>
</evidence>
<name>DER_PSEE4</name>
<organism>
    <name type="scientific">Pseudomonas entomophila (strain L48)</name>
    <dbReference type="NCBI Taxonomy" id="384676"/>
    <lineage>
        <taxon>Bacteria</taxon>
        <taxon>Pseudomonadati</taxon>
        <taxon>Pseudomonadota</taxon>
        <taxon>Gammaproteobacteria</taxon>
        <taxon>Pseudomonadales</taxon>
        <taxon>Pseudomonadaceae</taxon>
        <taxon>Pseudomonas</taxon>
    </lineage>
</organism>
<sequence>MVPVIALVGRPNVGKSTMFNRLTKTRDAIVGDLSGLTRDRQYGDASWQGRSYILIDTGGITGDEVGMDEKMAEQSLMAIEEADYVLFLVDARAGMTAADQMIAEHLRKRNKEAILVANKIDNIDADVARAEFSPLGMGNAIPVAGSQGRGINALMEAVLGHIPRDPVEDALDEDVAEGEEATRIPGPSEKDGIKIAIIGRPNVGKSTLVNRMLGEERVVVYDQPGTTRDSIYIPFERDGEKYTFIDTAGVRKRGKIHEEVEKFSVVKTLQAIKDANVVIFVMDAREGVVDHDLNLLGFALDAGRAVVIALNKWDGMEPGERDYVKTELERRLFFVDFADIHFISALHGTGVGHLYKSVQAAFMSAVTRWPTSRLTQILEDAISVHQPPLVNGRRIKLRYAHLGGANPPLIVIHGNQTDKIPNSYSRYLENTYRRVLKLVGTPIRIEYKGGDNPFEGKKNTLTDRQVNKKRRLMSHHKKAEKKRRDKRK</sequence>
<proteinExistence type="inferred from homology"/>
<feature type="chain" id="PRO_1000011700" description="GTPase Der">
    <location>
        <begin position="1"/>
        <end position="488"/>
    </location>
</feature>
<feature type="domain" description="EngA-type G 1">
    <location>
        <begin position="3"/>
        <end position="166"/>
    </location>
</feature>
<feature type="domain" description="EngA-type G 2">
    <location>
        <begin position="193"/>
        <end position="366"/>
    </location>
</feature>
<feature type="domain" description="KH-like" evidence="1">
    <location>
        <begin position="367"/>
        <end position="451"/>
    </location>
</feature>
<feature type="region of interest" description="Disordered" evidence="2">
    <location>
        <begin position="449"/>
        <end position="488"/>
    </location>
</feature>
<feature type="compositionally biased region" description="Basic and acidic residues" evidence="2">
    <location>
        <begin position="449"/>
        <end position="461"/>
    </location>
</feature>
<feature type="compositionally biased region" description="Basic residues" evidence="2">
    <location>
        <begin position="467"/>
        <end position="488"/>
    </location>
</feature>
<feature type="binding site" evidence="1">
    <location>
        <begin position="9"/>
        <end position="16"/>
    </location>
    <ligand>
        <name>GTP</name>
        <dbReference type="ChEBI" id="CHEBI:37565"/>
        <label>1</label>
    </ligand>
</feature>
<feature type="binding site" evidence="1">
    <location>
        <begin position="56"/>
        <end position="60"/>
    </location>
    <ligand>
        <name>GTP</name>
        <dbReference type="ChEBI" id="CHEBI:37565"/>
        <label>1</label>
    </ligand>
</feature>
<feature type="binding site" evidence="1">
    <location>
        <begin position="118"/>
        <end position="121"/>
    </location>
    <ligand>
        <name>GTP</name>
        <dbReference type="ChEBI" id="CHEBI:37565"/>
        <label>1</label>
    </ligand>
</feature>
<feature type="binding site" evidence="1">
    <location>
        <begin position="199"/>
        <end position="206"/>
    </location>
    <ligand>
        <name>GTP</name>
        <dbReference type="ChEBI" id="CHEBI:37565"/>
        <label>2</label>
    </ligand>
</feature>
<feature type="binding site" evidence="1">
    <location>
        <begin position="246"/>
        <end position="250"/>
    </location>
    <ligand>
        <name>GTP</name>
        <dbReference type="ChEBI" id="CHEBI:37565"/>
        <label>2</label>
    </ligand>
</feature>
<feature type="binding site" evidence="1">
    <location>
        <begin position="311"/>
        <end position="314"/>
    </location>
    <ligand>
        <name>GTP</name>
        <dbReference type="ChEBI" id="CHEBI:37565"/>
        <label>2</label>
    </ligand>
</feature>
<dbReference type="EMBL" id="CT573326">
    <property type="protein sequence ID" value="CAK13928.1"/>
    <property type="molecule type" value="Genomic_DNA"/>
</dbReference>
<dbReference type="RefSeq" id="WP_011532351.1">
    <property type="nucleotide sequence ID" value="NC_008027.1"/>
</dbReference>
<dbReference type="SMR" id="Q1IEH7"/>
<dbReference type="STRING" id="384676.PSEEN1025"/>
<dbReference type="GeneID" id="32804320"/>
<dbReference type="KEGG" id="pen:PSEEN1025"/>
<dbReference type="eggNOG" id="COG1160">
    <property type="taxonomic scope" value="Bacteria"/>
</dbReference>
<dbReference type="HOGENOM" id="CLU_016077_6_2_6"/>
<dbReference type="OrthoDB" id="9805918at2"/>
<dbReference type="Proteomes" id="UP000000658">
    <property type="component" value="Chromosome"/>
</dbReference>
<dbReference type="GO" id="GO:0005525">
    <property type="term" value="F:GTP binding"/>
    <property type="evidence" value="ECO:0007669"/>
    <property type="project" value="UniProtKB-UniRule"/>
</dbReference>
<dbReference type="GO" id="GO:0043022">
    <property type="term" value="F:ribosome binding"/>
    <property type="evidence" value="ECO:0007669"/>
    <property type="project" value="TreeGrafter"/>
</dbReference>
<dbReference type="GO" id="GO:0042254">
    <property type="term" value="P:ribosome biogenesis"/>
    <property type="evidence" value="ECO:0007669"/>
    <property type="project" value="UniProtKB-KW"/>
</dbReference>
<dbReference type="CDD" id="cd01894">
    <property type="entry name" value="EngA1"/>
    <property type="match status" value="1"/>
</dbReference>
<dbReference type="CDD" id="cd01895">
    <property type="entry name" value="EngA2"/>
    <property type="match status" value="1"/>
</dbReference>
<dbReference type="FunFam" id="3.30.300.20:FF:000004">
    <property type="entry name" value="GTPase Der"/>
    <property type="match status" value="1"/>
</dbReference>
<dbReference type="FunFam" id="3.40.50.300:FF:000040">
    <property type="entry name" value="GTPase Der"/>
    <property type="match status" value="1"/>
</dbReference>
<dbReference type="FunFam" id="3.40.50.300:FF:000057">
    <property type="entry name" value="GTPase Der"/>
    <property type="match status" value="1"/>
</dbReference>
<dbReference type="Gene3D" id="3.30.300.20">
    <property type="match status" value="1"/>
</dbReference>
<dbReference type="Gene3D" id="3.40.50.300">
    <property type="entry name" value="P-loop containing nucleotide triphosphate hydrolases"/>
    <property type="match status" value="2"/>
</dbReference>
<dbReference type="HAMAP" id="MF_00195">
    <property type="entry name" value="GTPase_Der"/>
    <property type="match status" value="1"/>
</dbReference>
<dbReference type="InterPro" id="IPR031166">
    <property type="entry name" value="G_ENGA"/>
</dbReference>
<dbReference type="InterPro" id="IPR006073">
    <property type="entry name" value="GTP-bd"/>
</dbReference>
<dbReference type="InterPro" id="IPR016484">
    <property type="entry name" value="GTPase_Der"/>
</dbReference>
<dbReference type="InterPro" id="IPR032859">
    <property type="entry name" value="KH_dom-like"/>
</dbReference>
<dbReference type="InterPro" id="IPR015946">
    <property type="entry name" value="KH_dom-like_a/b"/>
</dbReference>
<dbReference type="InterPro" id="IPR027417">
    <property type="entry name" value="P-loop_NTPase"/>
</dbReference>
<dbReference type="InterPro" id="IPR005225">
    <property type="entry name" value="Small_GTP-bd"/>
</dbReference>
<dbReference type="NCBIfam" id="TIGR03594">
    <property type="entry name" value="GTPase_EngA"/>
    <property type="match status" value="1"/>
</dbReference>
<dbReference type="NCBIfam" id="TIGR00231">
    <property type="entry name" value="small_GTP"/>
    <property type="match status" value="2"/>
</dbReference>
<dbReference type="PANTHER" id="PTHR43834">
    <property type="entry name" value="GTPASE DER"/>
    <property type="match status" value="1"/>
</dbReference>
<dbReference type="PANTHER" id="PTHR43834:SF6">
    <property type="entry name" value="GTPASE DER"/>
    <property type="match status" value="1"/>
</dbReference>
<dbReference type="Pfam" id="PF14714">
    <property type="entry name" value="KH_dom-like"/>
    <property type="match status" value="1"/>
</dbReference>
<dbReference type="Pfam" id="PF01926">
    <property type="entry name" value="MMR_HSR1"/>
    <property type="match status" value="2"/>
</dbReference>
<dbReference type="PIRSF" id="PIRSF006485">
    <property type="entry name" value="GTP-binding_EngA"/>
    <property type="match status" value="1"/>
</dbReference>
<dbReference type="PRINTS" id="PR00326">
    <property type="entry name" value="GTP1OBG"/>
</dbReference>
<dbReference type="SUPFAM" id="SSF52540">
    <property type="entry name" value="P-loop containing nucleoside triphosphate hydrolases"/>
    <property type="match status" value="2"/>
</dbReference>
<dbReference type="PROSITE" id="PS51712">
    <property type="entry name" value="G_ENGA"/>
    <property type="match status" value="2"/>
</dbReference>
<protein>
    <recommendedName>
        <fullName evidence="1">GTPase Der</fullName>
    </recommendedName>
    <alternativeName>
        <fullName evidence="1">GTP-binding protein EngA</fullName>
    </alternativeName>
</protein>
<accession>Q1IEH7</accession>
<comment type="function">
    <text evidence="1">GTPase that plays an essential role in the late steps of ribosome biogenesis.</text>
</comment>
<comment type="subunit">
    <text evidence="1">Associates with the 50S ribosomal subunit.</text>
</comment>
<comment type="similarity">
    <text evidence="1">Belongs to the TRAFAC class TrmE-Era-EngA-EngB-Septin-like GTPase superfamily. EngA (Der) GTPase family.</text>
</comment>
<gene>
    <name evidence="1" type="primary">der</name>
    <name type="synonym">engA</name>
    <name type="ordered locus">PSEEN1025</name>
</gene>
<reference key="1">
    <citation type="journal article" date="2006" name="Nat. Biotechnol.">
        <title>Complete genome sequence of the entomopathogenic and metabolically versatile soil bacterium Pseudomonas entomophila.</title>
        <authorList>
            <person name="Vodovar N."/>
            <person name="Vallenet D."/>
            <person name="Cruveiller S."/>
            <person name="Rouy Z."/>
            <person name="Barbe V."/>
            <person name="Acosta C."/>
            <person name="Cattolico L."/>
            <person name="Jubin C."/>
            <person name="Lajus A."/>
            <person name="Segurens B."/>
            <person name="Vacherie B."/>
            <person name="Wincker P."/>
            <person name="Weissenbach J."/>
            <person name="Lemaitre B."/>
            <person name="Medigue C."/>
            <person name="Boccard F."/>
        </authorList>
    </citation>
    <scope>NUCLEOTIDE SEQUENCE [LARGE SCALE GENOMIC DNA]</scope>
    <source>
        <strain>L48</strain>
    </source>
</reference>
<keyword id="KW-0342">GTP-binding</keyword>
<keyword id="KW-0547">Nucleotide-binding</keyword>
<keyword id="KW-0677">Repeat</keyword>
<keyword id="KW-0690">Ribosome biogenesis</keyword>